<dbReference type="EMBL" id="CP000155">
    <property type="protein sequence ID" value="ABC32858.1"/>
    <property type="molecule type" value="Genomic_DNA"/>
</dbReference>
<dbReference type="RefSeq" id="WP_011399916.1">
    <property type="nucleotide sequence ID" value="NC_007645.1"/>
</dbReference>
<dbReference type="SMR" id="Q2S916"/>
<dbReference type="STRING" id="349521.HCH_06213"/>
<dbReference type="KEGG" id="hch:HCH_06213"/>
<dbReference type="eggNOG" id="COG0185">
    <property type="taxonomic scope" value="Bacteria"/>
</dbReference>
<dbReference type="HOGENOM" id="CLU_144911_0_1_6"/>
<dbReference type="OrthoDB" id="9797833at2"/>
<dbReference type="Proteomes" id="UP000000238">
    <property type="component" value="Chromosome"/>
</dbReference>
<dbReference type="GO" id="GO:0005737">
    <property type="term" value="C:cytoplasm"/>
    <property type="evidence" value="ECO:0007669"/>
    <property type="project" value="UniProtKB-ARBA"/>
</dbReference>
<dbReference type="GO" id="GO:0015935">
    <property type="term" value="C:small ribosomal subunit"/>
    <property type="evidence" value="ECO:0007669"/>
    <property type="project" value="InterPro"/>
</dbReference>
<dbReference type="GO" id="GO:0019843">
    <property type="term" value="F:rRNA binding"/>
    <property type="evidence" value="ECO:0007669"/>
    <property type="project" value="UniProtKB-UniRule"/>
</dbReference>
<dbReference type="GO" id="GO:0003735">
    <property type="term" value="F:structural constituent of ribosome"/>
    <property type="evidence" value="ECO:0007669"/>
    <property type="project" value="InterPro"/>
</dbReference>
<dbReference type="GO" id="GO:0000028">
    <property type="term" value="P:ribosomal small subunit assembly"/>
    <property type="evidence" value="ECO:0007669"/>
    <property type="project" value="TreeGrafter"/>
</dbReference>
<dbReference type="GO" id="GO:0006412">
    <property type="term" value="P:translation"/>
    <property type="evidence" value="ECO:0007669"/>
    <property type="project" value="UniProtKB-UniRule"/>
</dbReference>
<dbReference type="FunFam" id="3.30.860.10:FF:000001">
    <property type="entry name" value="30S ribosomal protein S19"/>
    <property type="match status" value="1"/>
</dbReference>
<dbReference type="Gene3D" id="3.30.860.10">
    <property type="entry name" value="30s Ribosomal Protein S19, Chain A"/>
    <property type="match status" value="1"/>
</dbReference>
<dbReference type="HAMAP" id="MF_00531">
    <property type="entry name" value="Ribosomal_uS19"/>
    <property type="match status" value="1"/>
</dbReference>
<dbReference type="InterPro" id="IPR002222">
    <property type="entry name" value="Ribosomal_uS19"/>
</dbReference>
<dbReference type="InterPro" id="IPR005732">
    <property type="entry name" value="Ribosomal_uS19_bac-type"/>
</dbReference>
<dbReference type="InterPro" id="IPR020934">
    <property type="entry name" value="Ribosomal_uS19_CS"/>
</dbReference>
<dbReference type="InterPro" id="IPR023575">
    <property type="entry name" value="Ribosomal_uS19_SF"/>
</dbReference>
<dbReference type="NCBIfam" id="TIGR01050">
    <property type="entry name" value="rpsS_bact"/>
    <property type="match status" value="1"/>
</dbReference>
<dbReference type="PANTHER" id="PTHR11880">
    <property type="entry name" value="RIBOSOMAL PROTEIN S19P FAMILY MEMBER"/>
    <property type="match status" value="1"/>
</dbReference>
<dbReference type="PANTHER" id="PTHR11880:SF8">
    <property type="entry name" value="SMALL RIBOSOMAL SUBUNIT PROTEIN US19M"/>
    <property type="match status" value="1"/>
</dbReference>
<dbReference type="Pfam" id="PF00203">
    <property type="entry name" value="Ribosomal_S19"/>
    <property type="match status" value="1"/>
</dbReference>
<dbReference type="PIRSF" id="PIRSF002144">
    <property type="entry name" value="Ribosomal_S19"/>
    <property type="match status" value="1"/>
</dbReference>
<dbReference type="PRINTS" id="PR00975">
    <property type="entry name" value="RIBOSOMALS19"/>
</dbReference>
<dbReference type="SUPFAM" id="SSF54570">
    <property type="entry name" value="Ribosomal protein S19"/>
    <property type="match status" value="1"/>
</dbReference>
<dbReference type="PROSITE" id="PS00323">
    <property type="entry name" value="RIBOSOMAL_S19"/>
    <property type="match status" value="1"/>
</dbReference>
<sequence>MPRSLKKGPFIDLHLLKKVETAVEVKDKKPIKTWSRRSTIFPEMVGLTIAVHNGRQHVPVYVTEDMVGHKLGEFAATRTYRGHAADKKAKR</sequence>
<accession>Q2S916</accession>
<evidence type="ECO:0000255" key="1">
    <source>
        <dbReference type="HAMAP-Rule" id="MF_00531"/>
    </source>
</evidence>
<evidence type="ECO:0000305" key="2"/>
<feature type="chain" id="PRO_0000265370" description="Small ribosomal subunit protein uS19">
    <location>
        <begin position="1"/>
        <end position="91"/>
    </location>
</feature>
<comment type="function">
    <text evidence="1">Protein S19 forms a complex with S13 that binds strongly to the 16S ribosomal RNA.</text>
</comment>
<comment type="similarity">
    <text evidence="1">Belongs to the universal ribosomal protein uS19 family.</text>
</comment>
<gene>
    <name evidence="1" type="primary">rpsS</name>
    <name type="ordered locus">HCH_06213</name>
</gene>
<reference key="1">
    <citation type="journal article" date="2005" name="Nucleic Acids Res.">
        <title>Genomic blueprint of Hahella chejuensis, a marine microbe producing an algicidal agent.</title>
        <authorList>
            <person name="Jeong H."/>
            <person name="Yim J.H."/>
            <person name="Lee C."/>
            <person name="Choi S.-H."/>
            <person name="Park Y.K."/>
            <person name="Yoon S.H."/>
            <person name="Hur C.-G."/>
            <person name="Kang H.-Y."/>
            <person name="Kim D."/>
            <person name="Lee H.H."/>
            <person name="Park K.H."/>
            <person name="Park S.-H."/>
            <person name="Park H.-S."/>
            <person name="Lee H.K."/>
            <person name="Oh T.K."/>
            <person name="Kim J.F."/>
        </authorList>
    </citation>
    <scope>NUCLEOTIDE SEQUENCE [LARGE SCALE GENOMIC DNA]</scope>
    <source>
        <strain>KCTC 2396</strain>
    </source>
</reference>
<organism>
    <name type="scientific">Hahella chejuensis (strain KCTC 2396)</name>
    <dbReference type="NCBI Taxonomy" id="349521"/>
    <lineage>
        <taxon>Bacteria</taxon>
        <taxon>Pseudomonadati</taxon>
        <taxon>Pseudomonadota</taxon>
        <taxon>Gammaproteobacteria</taxon>
        <taxon>Oceanospirillales</taxon>
        <taxon>Hahellaceae</taxon>
        <taxon>Hahella</taxon>
    </lineage>
</organism>
<proteinExistence type="inferred from homology"/>
<protein>
    <recommendedName>
        <fullName evidence="1">Small ribosomal subunit protein uS19</fullName>
    </recommendedName>
    <alternativeName>
        <fullName evidence="2">30S ribosomal protein S19</fullName>
    </alternativeName>
</protein>
<name>RS19_HAHCH</name>
<keyword id="KW-1185">Reference proteome</keyword>
<keyword id="KW-0687">Ribonucleoprotein</keyword>
<keyword id="KW-0689">Ribosomal protein</keyword>
<keyword id="KW-0694">RNA-binding</keyword>
<keyword id="KW-0699">rRNA-binding</keyword>